<protein>
    <recommendedName>
        <fullName evidence="2">Heat shock cognate 71 kDa protein</fullName>
        <ecNumber evidence="2">3.6.4.10</ecNumber>
    </recommendedName>
    <alternativeName>
        <fullName>Heat shock 70 kDa protein 8</fullName>
    </alternativeName>
</protein>
<evidence type="ECO:0000250" key="1"/>
<evidence type="ECO:0000250" key="2">
    <source>
        <dbReference type="UniProtKB" id="P11142"/>
    </source>
</evidence>
<evidence type="ECO:0000250" key="3">
    <source>
        <dbReference type="UniProtKB" id="P19120"/>
    </source>
</evidence>
<evidence type="ECO:0000250" key="4">
    <source>
        <dbReference type="UniProtKB" id="P63017"/>
    </source>
</evidence>
<evidence type="ECO:0000250" key="5">
    <source>
        <dbReference type="UniProtKB" id="P63018"/>
    </source>
</evidence>
<evidence type="ECO:0000256" key="6">
    <source>
        <dbReference type="SAM" id="MobiDB-lite"/>
    </source>
</evidence>
<evidence type="ECO:0000305" key="7"/>
<keyword id="KW-0007">Acetylation</keyword>
<keyword id="KW-0067">ATP-binding</keyword>
<keyword id="KW-0072">Autophagy</keyword>
<keyword id="KW-1003">Cell membrane</keyword>
<keyword id="KW-0143">Chaperone</keyword>
<keyword id="KW-0963">Cytoplasm</keyword>
<keyword id="KW-0378">Hydrolase</keyword>
<keyword id="KW-1017">Isopeptide bond</keyword>
<keyword id="KW-0458">Lysosome</keyword>
<keyword id="KW-0472">Membrane</keyword>
<keyword id="KW-0488">Methylation</keyword>
<keyword id="KW-0507">mRNA processing</keyword>
<keyword id="KW-0508">mRNA splicing</keyword>
<keyword id="KW-0547">Nucleotide-binding</keyword>
<keyword id="KW-0539">Nucleus</keyword>
<keyword id="KW-0597">Phosphoprotein</keyword>
<keyword id="KW-1185">Reference proteome</keyword>
<keyword id="KW-0747">Spliceosome</keyword>
<keyword id="KW-0346">Stress response</keyword>
<keyword id="KW-0832">Ubl conjugation</keyword>
<accession>A2Q0Z1</accession>
<feature type="initiator methionine" description="Removed" evidence="2">
    <location>
        <position position="1"/>
    </location>
</feature>
<feature type="chain" id="PRO_0000286046" description="Heat shock cognate 71 kDa protein">
    <location>
        <begin position="2"/>
        <end position="646"/>
    </location>
</feature>
<feature type="region of interest" description="Nucleotide-binding domain (NBD)" evidence="2">
    <location>
        <begin position="2"/>
        <end position="386"/>
    </location>
</feature>
<feature type="region of interest" description="Interaction with BAG1" evidence="1">
    <location>
        <begin position="186"/>
        <end position="377"/>
    </location>
</feature>
<feature type="region of interest" description="Substrate-binding domain (SBD)" evidence="2">
    <location>
        <begin position="394"/>
        <end position="509"/>
    </location>
</feature>
<feature type="region of interest" description="Disordered" evidence="6">
    <location>
        <begin position="614"/>
        <end position="646"/>
    </location>
</feature>
<feature type="compositionally biased region" description="Gly residues" evidence="6">
    <location>
        <begin position="616"/>
        <end position="632"/>
    </location>
</feature>
<feature type="binding site" evidence="3">
    <location>
        <position position="14"/>
    </location>
    <ligand>
        <name>ADP</name>
        <dbReference type="ChEBI" id="CHEBI:456216"/>
    </ligand>
</feature>
<feature type="binding site" evidence="3">
    <location>
        <position position="15"/>
    </location>
    <ligand>
        <name>ADP</name>
        <dbReference type="ChEBI" id="CHEBI:456216"/>
    </ligand>
</feature>
<feature type="binding site" evidence="3">
    <location>
        <position position="202"/>
    </location>
    <ligand>
        <name>ADP</name>
        <dbReference type="ChEBI" id="CHEBI:456216"/>
    </ligand>
</feature>
<feature type="binding site" evidence="3">
    <location>
        <position position="268"/>
    </location>
    <ligand>
        <name>ADP</name>
        <dbReference type="ChEBI" id="CHEBI:456216"/>
    </ligand>
</feature>
<feature type="binding site" evidence="3">
    <location>
        <position position="271"/>
    </location>
    <ligand>
        <name>ADP</name>
        <dbReference type="ChEBI" id="CHEBI:456216"/>
    </ligand>
</feature>
<feature type="binding site" evidence="3">
    <location>
        <position position="275"/>
    </location>
    <ligand>
        <name>ADP</name>
        <dbReference type="ChEBI" id="CHEBI:456216"/>
    </ligand>
</feature>
<feature type="binding site" evidence="3">
    <location>
        <position position="339"/>
    </location>
    <ligand>
        <name>ADP</name>
        <dbReference type="ChEBI" id="CHEBI:456216"/>
    </ligand>
</feature>
<feature type="modified residue" description="N-acetylserine" evidence="2">
    <location>
        <position position="2"/>
    </location>
</feature>
<feature type="modified residue" description="N6-acetyllysine" evidence="4">
    <location>
        <position position="108"/>
    </location>
</feature>
<feature type="modified residue" description="Phosphoserine" evidence="2">
    <location>
        <position position="153"/>
    </location>
</feature>
<feature type="modified residue" description="N6-acetyllysine" evidence="2">
    <location>
        <position position="246"/>
    </location>
</feature>
<feature type="modified residue" description="N6-acetyllysine; alternate" evidence="2">
    <location>
        <position position="319"/>
    </location>
</feature>
<feature type="modified residue" description="N6-succinyllysine; alternate" evidence="4">
    <location>
        <position position="319"/>
    </location>
</feature>
<feature type="modified residue" description="N6-acetyllysine" evidence="4">
    <location>
        <position position="328"/>
    </location>
</feature>
<feature type="modified residue" description="Phosphoserine" evidence="2">
    <location>
        <position position="329"/>
    </location>
</feature>
<feature type="modified residue" description="Phosphoserine" evidence="2">
    <location>
        <position position="362"/>
    </location>
</feature>
<feature type="modified residue" description="Omega-N-methylarginine" evidence="2">
    <location>
        <position position="469"/>
    </location>
</feature>
<feature type="modified residue" description="N6-acetyllysine; alternate" evidence="4">
    <location>
        <position position="512"/>
    </location>
</feature>
<feature type="modified residue" description="N6-succinyllysine; alternate" evidence="4">
    <location>
        <position position="512"/>
    </location>
</feature>
<feature type="modified residue" description="N6-acetyllysine" evidence="4">
    <location>
        <position position="524"/>
    </location>
</feature>
<feature type="modified residue" description="Phosphoserine" evidence="2">
    <location>
        <position position="541"/>
    </location>
</feature>
<feature type="modified residue" description="N6,N6,N6-trimethyllysine; by METTL21A; in vitro" evidence="2">
    <location>
        <position position="561"/>
    </location>
</feature>
<feature type="modified residue" description="N6,N6-dimethyllysine" evidence="2">
    <location>
        <position position="561"/>
    </location>
</feature>
<feature type="modified residue" description="N6-acetyllysine" evidence="2">
    <location>
        <position position="589"/>
    </location>
</feature>
<feature type="modified residue" description="N6-acetyllysine" evidence="2">
    <location>
        <position position="597"/>
    </location>
</feature>
<feature type="modified residue" description="N6-acetyllysine" evidence="2">
    <location>
        <position position="601"/>
    </location>
</feature>
<feature type="cross-link" description="Glycyl lysine isopeptide (Lys-Gly) (interchain with G-Cter in SUMO1); alternate" evidence="2">
    <location>
        <position position="512"/>
    </location>
</feature>
<feature type="cross-link" description="Glycyl lysine isopeptide (Lys-Gly) (interchain with G-Cter in SUMO2); alternate" evidence="2">
    <location>
        <position position="512"/>
    </location>
</feature>
<gene>
    <name evidence="2" type="primary">HSPA8</name>
    <name evidence="2" type="synonym">HSC70</name>
</gene>
<name>HSP7C_HORSE</name>
<reference key="1">
    <citation type="submission" date="2007-01" db="EMBL/GenBank/DDBJ databases">
        <title>Cloning of genes expressed in equine tendon.</title>
        <authorList>
            <person name="Hasegawa T."/>
            <person name="Hayashi K."/>
            <person name="Kagawa Y."/>
            <person name="Akiyama Y."/>
            <person name="Suzuki Y."/>
            <person name="Sugano S."/>
            <person name="Ishida N."/>
        </authorList>
    </citation>
    <scope>NUCLEOTIDE SEQUENCE [MRNA]</scope>
    <source>
        <strain>Thoroughbred</strain>
        <tissue>Tendon</tissue>
    </source>
</reference>
<dbReference type="EC" id="3.6.4.10" evidence="2"/>
<dbReference type="EMBL" id="AB292109">
    <property type="protein sequence ID" value="BAF46109.1"/>
    <property type="molecule type" value="mRNA"/>
</dbReference>
<dbReference type="RefSeq" id="NP_001075247.1">
    <property type="nucleotide sequence ID" value="NM_001081778.2"/>
</dbReference>
<dbReference type="BMRB" id="A2Q0Z1"/>
<dbReference type="SMR" id="A2Q0Z1"/>
<dbReference type="FunCoup" id="A2Q0Z1">
    <property type="interactions" value="1929"/>
</dbReference>
<dbReference type="STRING" id="9796.ENSECAP00000031747"/>
<dbReference type="PaxDb" id="9796-ENSECAP00000031747"/>
<dbReference type="PeptideAtlas" id="A2Q0Z1"/>
<dbReference type="GeneID" id="100009679"/>
<dbReference type="KEGG" id="ecb:100009679"/>
<dbReference type="CTD" id="3312"/>
<dbReference type="HOGENOM" id="CLU_005965_3_0_1"/>
<dbReference type="InParanoid" id="A2Q0Z1"/>
<dbReference type="OMA" id="AYTKNQD"/>
<dbReference type="OrthoDB" id="2401965at2759"/>
<dbReference type="Proteomes" id="UP000002281">
    <property type="component" value="Chromosome 7"/>
</dbReference>
<dbReference type="Bgee" id="ENSECAG00000037704">
    <property type="expression patterns" value="Expressed in retina and 23 other cell types or tissues"/>
</dbReference>
<dbReference type="ExpressionAtlas" id="A2Q0Z1">
    <property type="expression patterns" value="baseline"/>
</dbReference>
<dbReference type="GO" id="GO:0005737">
    <property type="term" value="C:cytoplasm"/>
    <property type="evidence" value="ECO:0000318"/>
    <property type="project" value="GO_Central"/>
</dbReference>
<dbReference type="GO" id="GO:0005829">
    <property type="term" value="C:cytosol"/>
    <property type="evidence" value="ECO:0000318"/>
    <property type="project" value="GO_Central"/>
</dbReference>
<dbReference type="GO" id="GO:0005765">
    <property type="term" value="C:lysosomal membrane"/>
    <property type="evidence" value="ECO:0000250"/>
    <property type="project" value="UniProtKB"/>
</dbReference>
<dbReference type="GO" id="GO:0042470">
    <property type="term" value="C:melanosome"/>
    <property type="evidence" value="ECO:0007669"/>
    <property type="project" value="UniProtKB-SubCell"/>
</dbReference>
<dbReference type="GO" id="GO:0005730">
    <property type="term" value="C:nucleolus"/>
    <property type="evidence" value="ECO:0007669"/>
    <property type="project" value="UniProtKB-SubCell"/>
</dbReference>
<dbReference type="GO" id="GO:0005634">
    <property type="term" value="C:nucleus"/>
    <property type="evidence" value="ECO:0000250"/>
    <property type="project" value="UniProtKB"/>
</dbReference>
<dbReference type="GO" id="GO:0005886">
    <property type="term" value="C:plasma membrane"/>
    <property type="evidence" value="ECO:0000318"/>
    <property type="project" value="GO_Central"/>
</dbReference>
<dbReference type="GO" id="GO:0000974">
    <property type="term" value="C:Prp19 complex"/>
    <property type="evidence" value="ECO:0000250"/>
    <property type="project" value="UniProtKB"/>
</dbReference>
<dbReference type="GO" id="GO:1990904">
    <property type="term" value="C:ribonucleoprotein complex"/>
    <property type="evidence" value="ECO:0000250"/>
    <property type="project" value="UniProtKB"/>
</dbReference>
<dbReference type="GO" id="GO:0005681">
    <property type="term" value="C:spliceosomal complex"/>
    <property type="evidence" value="ECO:0007669"/>
    <property type="project" value="UniProtKB-KW"/>
</dbReference>
<dbReference type="GO" id="GO:0005524">
    <property type="term" value="F:ATP binding"/>
    <property type="evidence" value="ECO:0007669"/>
    <property type="project" value="UniProtKB-KW"/>
</dbReference>
<dbReference type="GO" id="GO:0016887">
    <property type="term" value="F:ATP hydrolysis activity"/>
    <property type="evidence" value="ECO:0000318"/>
    <property type="project" value="GO_Central"/>
</dbReference>
<dbReference type="GO" id="GO:0140662">
    <property type="term" value="F:ATP-dependent protein folding chaperone"/>
    <property type="evidence" value="ECO:0007669"/>
    <property type="project" value="InterPro"/>
</dbReference>
<dbReference type="GO" id="GO:0031072">
    <property type="term" value="F:heat shock protein binding"/>
    <property type="evidence" value="ECO:0000318"/>
    <property type="project" value="GO_Central"/>
</dbReference>
<dbReference type="GO" id="GO:0044183">
    <property type="term" value="F:protein folding chaperone"/>
    <property type="evidence" value="ECO:0000318"/>
    <property type="project" value="GO_Central"/>
</dbReference>
<dbReference type="GO" id="GO:0030674">
    <property type="term" value="F:protein-macromolecule adaptor activity"/>
    <property type="evidence" value="ECO:0000250"/>
    <property type="project" value="UniProtKB"/>
</dbReference>
<dbReference type="GO" id="GO:0051085">
    <property type="term" value="P:chaperone cofactor-dependent protein refolding"/>
    <property type="evidence" value="ECO:0000318"/>
    <property type="project" value="GO_Central"/>
</dbReference>
<dbReference type="GO" id="GO:0072318">
    <property type="term" value="P:clathrin coat disassembly"/>
    <property type="evidence" value="ECO:0000314"/>
    <property type="project" value="UniProtKB"/>
</dbReference>
<dbReference type="GO" id="GO:0006397">
    <property type="term" value="P:mRNA processing"/>
    <property type="evidence" value="ECO:0007669"/>
    <property type="project" value="UniProtKB-KW"/>
</dbReference>
<dbReference type="GO" id="GO:0045892">
    <property type="term" value="P:negative regulation of DNA-templated transcription"/>
    <property type="evidence" value="ECO:0000250"/>
    <property type="project" value="UniProtKB"/>
</dbReference>
<dbReference type="GO" id="GO:0042026">
    <property type="term" value="P:protein refolding"/>
    <property type="evidence" value="ECO:0000318"/>
    <property type="project" value="GO_Central"/>
</dbReference>
<dbReference type="GO" id="GO:0061740">
    <property type="term" value="P:protein targeting to lysosome involved in chaperone-mediated autophagy"/>
    <property type="evidence" value="ECO:0000250"/>
    <property type="project" value="UniProtKB"/>
</dbReference>
<dbReference type="GO" id="GO:0008380">
    <property type="term" value="P:RNA splicing"/>
    <property type="evidence" value="ECO:0007669"/>
    <property type="project" value="UniProtKB-KW"/>
</dbReference>
<dbReference type="CDD" id="cd10233">
    <property type="entry name" value="ASKHA_NBD_HSP70_HSPA1"/>
    <property type="match status" value="1"/>
</dbReference>
<dbReference type="FunFam" id="2.60.34.10:FF:000002">
    <property type="entry name" value="Heat shock 70 kDa"/>
    <property type="match status" value="1"/>
</dbReference>
<dbReference type="FunFam" id="3.30.420.40:FF:000172">
    <property type="entry name" value="Heat shock 70 kDa protein"/>
    <property type="match status" value="1"/>
</dbReference>
<dbReference type="FunFam" id="3.30.420.40:FF:000028">
    <property type="entry name" value="heat shock 70 kDa protein-like"/>
    <property type="match status" value="1"/>
</dbReference>
<dbReference type="FunFam" id="3.30.420.40:FF:000135">
    <property type="entry name" value="Heat shock cognate 71 kDa protein"/>
    <property type="match status" value="1"/>
</dbReference>
<dbReference type="FunFam" id="3.90.640.10:FF:000134">
    <property type="entry name" value="Heat shock cognate 71 kDa protein"/>
    <property type="match status" value="1"/>
</dbReference>
<dbReference type="FunFam" id="1.20.1270.10:FF:000003">
    <property type="entry name" value="heat shock cognate 71 kDa protein-like"/>
    <property type="match status" value="1"/>
</dbReference>
<dbReference type="FunFam" id="3.30.420.40:FF:000026">
    <property type="entry name" value="Heat shock protein 70"/>
    <property type="match status" value="1"/>
</dbReference>
<dbReference type="FunFam" id="3.30.30.30:FF:000025">
    <property type="entry name" value="Uncharacterized protein"/>
    <property type="match status" value="1"/>
</dbReference>
<dbReference type="Gene3D" id="1.20.1270.10">
    <property type="match status" value="1"/>
</dbReference>
<dbReference type="Gene3D" id="3.30.30.30">
    <property type="match status" value="1"/>
</dbReference>
<dbReference type="Gene3D" id="3.30.420.40">
    <property type="match status" value="2"/>
</dbReference>
<dbReference type="Gene3D" id="3.90.640.10">
    <property type="entry name" value="Actin, Chain A, domain 4"/>
    <property type="match status" value="1"/>
</dbReference>
<dbReference type="Gene3D" id="2.60.34.10">
    <property type="entry name" value="Substrate Binding Domain Of DNAk, Chain A, domain 1"/>
    <property type="match status" value="1"/>
</dbReference>
<dbReference type="InterPro" id="IPR043129">
    <property type="entry name" value="ATPase_NBD"/>
</dbReference>
<dbReference type="InterPro" id="IPR018181">
    <property type="entry name" value="Heat_shock_70_CS"/>
</dbReference>
<dbReference type="InterPro" id="IPR029048">
    <property type="entry name" value="HSP70_C_sf"/>
</dbReference>
<dbReference type="InterPro" id="IPR029047">
    <property type="entry name" value="HSP70_peptide-bd_sf"/>
</dbReference>
<dbReference type="InterPro" id="IPR013126">
    <property type="entry name" value="Hsp_70_fam"/>
</dbReference>
<dbReference type="NCBIfam" id="NF001413">
    <property type="entry name" value="PRK00290.1"/>
    <property type="match status" value="1"/>
</dbReference>
<dbReference type="PANTHER" id="PTHR19375">
    <property type="entry name" value="HEAT SHOCK PROTEIN 70KDA"/>
    <property type="match status" value="1"/>
</dbReference>
<dbReference type="Pfam" id="PF00012">
    <property type="entry name" value="HSP70"/>
    <property type="match status" value="1"/>
</dbReference>
<dbReference type="PRINTS" id="PR00301">
    <property type="entry name" value="HEATSHOCK70"/>
</dbReference>
<dbReference type="SUPFAM" id="SSF53067">
    <property type="entry name" value="Actin-like ATPase domain"/>
    <property type="match status" value="2"/>
</dbReference>
<dbReference type="SUPFAM" id="SSF100934">
    <property type="entry name" value="Heat shock protein 70kD (HSP70), C-terminal subdomain"/>
    <property type="match status" value="1"/>
</dbReference>
<dbReference type="SUPFAM" id="SSF100920">
    <property type="entry name" value="Heat shock protein 70kD (HSP70), peptide-binding domain"/>
    <property type="match status" value="1"/>
</dbReference>
<dbReference type="PROSITE" id="PS00297">
    <property type="entry name" value="HSP70_1"/>
    <property type="match status" value="1"/>
</dbReference>
<dbReference type="PROSITE" id="PS00329">
    <property type="entry name" value="HSP70_2"/>
    <property type="match status" value="1"/>
</dbReference>
<dbReference type="PROSITE" id="PS01036">
    <property type="entry name" value="HSP70_3"/>
    <property type="match status" value="1"/>
</dbReference>
<sequence length="646" mass="70898">MSKGPAVGIDLGTTYSCVGVFQHGKVEIIANDQGNRTTPSYVAFTDTERLIGDAAKNQVAMNPTNTVFDAKRLIGRRFDDAVVQSDMKHWPFMVVNDAGRPKVQVEYKGETKSFYPEEVSSMVLTKMKEIAEAYLGKTVTNAVVTVPAYFNDSQRQATKDAGTIAGLNVLRIINEPTAAAIAYGLDKKVGAERNVLIFDLGGGTFDVSILTIEDGIFEVKSTAGDTHLGGEDFDNRMVNHFIAEFKRKHKKDISENKRAVRRLRTACERAKRTLSSSTQASIEIDSLYEGIDFYTSITRARFEELNADLFRGTLDPVEKALRDAKLDKSQIHDIVLVGGSTRIPKIQKLLQDFFNGKELNKSINPDEAVAYGAAVQAAILSGDKSENVQDLLLLDVTPLSLGIETAGGVMTVLIKRNTTIPTKQTQTFTTYSDNQPGVLIQVYEGERAMTKDNNLLGKFELTGIPPAPRGVPQIEVTFDIDANGILNVSAVDKSTGKENKITITNDKGRLSKEDIERMVQEAEKYKAEDEKQRDKVSSKNSLESYAFNMKATVEDEKLQGKINDEDKQKILDKCNEIINWLDKNQTAEKEEFEHQQKELEKVCNPIITKLYQSAGGMPGGMPGGFPGGGAPPSGGASSGPTIEEVD</sequence>
<organism>
    <name type="scientific">Equus caballus</name>
    <name type="common">Horse</name>
    <dbReference type="NCBI Taxonomy" id="9796"/>
    <lineage>
        <taxon>Eukaryota</taxon>
        <taxon>Metazoa</taxon>
        <taxon>Chordata</taxon>
        <taxon>Craniata</taxon>
        <taxon>Vertebrata</taxon>
        <taxon>Euteleostomi</taxon>
        <taxon>Mammalia</taxon>
        <taxon>Eutheria</taxon>
        <taxon>Laurasiatheria</taxon>
        <taxon>Perissodactyla</taxon>
        <taxon>Equidae</taxon>
        <taxon>Equus</taxon>
    </lineage>
</organism>
<comment type="function">
    <text evidence="2 3">Molecular chaperone implicated in a wide variety of cellular processes, including protection of the proteome from stress, folding and transport of newly synthesized polypeptides, chaperone-mediated autophagy, activation of proteolysis of misfolded proteins, formation and dissociation of protein complexes, and antigen presentation. Plays a pivotal role in the protein quality control system, ensuring the correct folding of proteins, the re-folding of misfolded proteins and controlling the targeting of proteins for subsequent degradation. This is achieved through cycles of ATP binding, ATP hydrolysis and ADP release, mediated by co-chaperones. The co-chaperones have been shown to not only regulate different steps of the ATPase cycle of HSP70, but they also have an individual specificity such that one co-chaperone may promote folding of a substrate while another may promote degradation. The affinity of HSP70 for polypeptides is regulated by its nucleotide bound state. In the ATP-bound form, it has a low affinity for substrate proteins. However, upon hydrolysis of the ATP to ADP, it undergoes a conformational change that increases its affinity for substrate proteins. HSP70 goes through repeated cycles of ATP hydrolysis and nucleotide exchange, which permits cycles of substrate binding and release. The HSP70-associated co-chaperones are of three types: J-domain co-chaperones HSP40s (stimulate ATPase hydrolysis by HSP70), the nucleotide exchange factors (NEF) such as BAG1/2/3 (facilitate conversion of HSP70 from the ADP-bound to the ATP-bound state thereby promoting substrate release), and the TPR domain chaperones such as HOPX and STUB1. Plays a critical role in mitochondrial import, delivers preproteins to the mitochondrial import receptor TOMM70. Acts as a repressor of transcriptional activation. Inhibits the transcriptional coactivator activity of CITED1 on Smad-mediated transcription. Component of the PRP19-CDC5L complex that forms an integral part of the spliceosome and is required for activating pre-mRNA splicing. May have a scaffolding role in the spliceosome assembly as it contacts all other components of the core complex. Binds bacterial lipopolysaccharide (LPS) and mediates LPS-induced inflammatory response, including TNF secretion by monocytes. Substrate recognition component in chaperone-mediated autophagy (CMA), a selective protein degradation process that mediates degradation of proteins with a -KFERQ motif: HSPA8/HSC70 specifically recognizes and binds cytosolic proteins bearing a -KFERQ motif and promotes their recruitment to the surface of the lysosome where they bind to lysosomal protein LAMP2. KFERQ motif-containing proteins are eventually transported into the lysosomal lumen where they are degraded. In conjunction with LAMP2, facilitates MHC class II presentation of cytoplasmic antigens by guiding antigens to the lysosomal membrane for interaction with LAMP2 which then elicits MHC class II presentation of peptides to the cell membrane. Participates in the ER-associated degradation (ERAD) quality control pathway in conjunction with J domain-containing co-chaperones and the E3 ligase STUB1. It is recruited to clathrin-coated vesicles through its interaction with DNAJC6 leading to activation of HSPA8/HSC70 ATPase activity and therefore uncoating of clathrin-coated vesicles (By similarity).</text>
</comment>
<comment type="catalytic activity">
    <reaction evidence="2">
        <text>ATP + H2O = ADP + phosphate + H(+)</text>
        <dbReference type="Rhea" id="RHEA:13065"/>
        <dbReference type="ChEBI" id="CHEBI:15377"/>
        <dbReference type="ChEBI" id="CHEBI:15378"/>
        <dbReference type="ChEBI" id="CHEBI:30616"/>
        <dbReference type="ChEBI" id="CHEBI:43474"/>
        <dbReference type="ChEBI" id="CHEBI:456216"/>
        <dbReference type="EC" id="3.6.4.10"/>
    </reaction>
</comment>
<comment type="subunit">
    <text evidence="2 3 4 5">Component of the chaperone-assisted selective autophagy (CASA) complex consisting of BAG3, HSPA8/HSC70, HSPB8 and STUB1/CHIP (By similarity). Identified in a IGF2BP1-dependent mRNP granule complex containing untranslated mRNAs (By similarity). Interacts with PACRG (By similarity). Interacts with HSPH1/HSP105 (By similarity). Interacts with IRAK1BP1 and BAG1 (By similarity). Interacts with DNAJC7 (By similarity). Interacts with DNAJB12 (via J domain) (By similarity). Interacts with DNAJB14 (via J domain) (By similarity). Interacts (via C-terminus) with the E3 ligase STUB1 forming a 210 kDa complex of one STUB1 and two HSPA8 molecules (By similarity). Interacts with CITED1 (via N-terminus); the interaction suppresses the association of CITED1 to p300/CBP and Smad-mediated transcription transactivation (By similarity). Component of the PRP19-CDC5L splicing complex composed of a core complex comprising a homotetramer of PRPF19, CDC5L, PLRG1 and BCAS2, and at least three less stably associated proteins CTNNBL1, CWC15 and HSPA8 (By similarity). Interacts with TRIM5 (By similarity). Part of a complex composed at least of ASH2L, EMSY, HCFC1, HSPA8, CCAR2, MATR3, MKI67, RBBP5, TUBB2A, WDR5 and ZNF335; this complex may have a histone H3-specific methyltransferase activity (By similarity). Interacts with METTL21A (By similarity). Following LPS binding, may form a complex with CXCR4, GDF5 and HSP90AA1 (By similarity). Interacts with PRKN (By similarity). Interacts with FOXP3 (By similarity). Interacts with DNAJC9 (via J domain) (By similarity). Interacts with MLLT11 (By similarity). Interacts with RNF207 (By similarity). Interacts with DNAJC21 (By similarity). Interacts with DNAJB2 (By similarity). Interacts with TTC1 (via TPR repeats) (By similarity). Interacts with SGTA (via TPR repeats) (By similarity). Interacts with HSF1 (via transactivation domain) (By similarity). Interacts with HOPX, STUB1, HSP40, HSP901, BAG2 and BAG3 (By similarity). Interacts with HSPC138 (By similarity). Interacts with ZMYND10 (By similarity). Interacts with VGF-derived peptide TLQP-21 (By similarity). Interacts with BCL2L1, GIMAP5 and MCL1; the interaction with BCL2L1 or MCL1 is impaired in the absence of GIMAP5 (By similarity). Interacts with NLPR12 (By similarity). Interacts with TTC4 (By similarity). Interacts with TOMM70; the interaction is required for preprotein mitochondrial import (By similarity). May interact with DNJC9; the interaction seems to be histone-dependent (By similarity). Interacts with BAG5 and JPH2; the interaction with JPH2 is increased in the presence of BAG5 (By similarity). Interacts with DNAJC6 (via J domain) in an ATP-dependent manner; this interaction stimulates the HSPA8's ATPase activity. Forms a complex composed of HSPA8, CLTC and DNAJC6 (By similarity). Interacts with HSPA8; this interaction modulates migratory and antigen-presenting capacities of dendritic cells (By similarity).</text>
</comment>
<comment type="subcellular location">
    <subcellularLocation>
        <location evidence="2">Cytoplasm</location>
    </subcellularLocation>
    <subcellularLocation>
        <location evidence="2">Melanosome</location>
    </subcellularLocation>
    <subcellularLocation>
        <location evidence="2">Nucleus</location>
        <location evidence="2">Nucleolus</location>
    </subcellularLocation>
    <subcellularLocation>
        <location evidence="2">Cell membrane</location>
    </subcellularLocation>
    <subcellularLocation>
        <location evidence="2">Lysosome membrane</location>
        <topology evidence="2">Peripheral membrane protein</topology>
        <orientation evidence="2">Cytoplasmic side</orientation>
    </subcellularLocation>
    <text evidence="2">Localized in cytoplasmic mRNP granules containing untranslated mRNAs. Translocates rapidly from the cytoplasm to the nuclei, and especially to the nucleoli, upon heat shock.</text>
</comment>
<comment type="induction">
    <text>Constitutively synthesized.</text>
</comment>
<comment type="domain">
    <text evidence="2">The N-terminal nucleotide binding domain (NBD) (also known as the ATPase domain) is responsible for binding and hydrolyzing ATP. The C-terminal substrate-binding domain (SBD) (also known as peptide-binding domain) binds to the client/substrate proteins. The two domains are allosterically coupled so that, when ATP is bound to the NBD, the SBD binds relatively weakly to clients. When ADP is bound in the NBD, a conformational change enhances the affinity of the SBD for client proteins.</text>
</comment>
<comment type="PTM">
    <text evidence="2">Acetylated.</text>
</comment>
<comment type="PTM">
    <text evidence="2">ISGylated.</text>
</comment>
<comment type="PTM">
    <text evidence="2">Trimethylation at Lys-561 reduces fibrillar SNCA binding.</text>
</comment>
<comment type="similarity">
    <text evidence="7">Belongs to the heat shock protein 70 family.</text>
</comment>
<proteinExistence type="evidence at transcript level"/>